<organism>
    <name type="scientific">Rhizobium rhizogenes (strain K84 / ATCC BAA-868)</name>
    <name type="common">Agrobacterium radiobacter</name>
    <dbReference type="NCBI Taxonomy" id="311403"/>
    <lineage>
        <taxon>Bacteria</taxon>
        <taxon>Pseudomonadati</taxon>
        <taxon>Pseudomonadota</taxon>
        <taxon>Alphaproteobacteria</taxon>
        <taxon>Hyphomicrobiales</taxon>
        <taxon>Rhizobiaceae</taxon>
        <taxon>Rhizobium/Agrobacterium group</taxon>
        <taxon>Rhizobium</taxon>
    </lineage>
</organism>
<reference key="1">
    <citation type="journal article" date="2009" name="J. Bacteriol.">
        <title>Genome sequences of three Agrobacterium biovars help elucidate the evolution of multichromosome genomes in bacteria.</title>
        <authorList>
            <person name="Slater S.C."/>
            <person name="Goldman B.S."/>
            <person name="Goodner B."/>
            <person name="Setubal J.C."/>
            <person name="Farrand S.K."/>
            <person name="Nester E.W."/>
            <person name="Burr T.J."/>
            <person name="Banta L."/>
            <person name="Dickerman A.W."/>
            <person name="Paulsen I."/>
            <person name="Otten L."/>
            <person name="Suen G."/>
            <person name="Welch R."/>
            <person name="Almeida N.F."/>
            <person name="Arnold F."/>
            <person name="Burton O.T."/>
            <person name="Du Z."/>
            <person name="Ewing A."/>
            <person name="Godsy E."/>
            <person name="Heisel S."/>
            <person name="Houmiel K.L."/>
            <person name="Jhaveri J."/>
            <person name="Lu J."/>
            <person name="Miller N.M."/>
            <person name="Norton S."/>
            <person name="Chen Q."/>
            <person name="Phoolcharoen W."/>
            <person name="Ohlin V."/>
            <person name="Ondrusek D."/>
            <person name="Pride N."/>
            <person name="Stricklin S.L."/>
            <person name="Sun J."/>
            <person name="Wheeler C."/>
            <person name="Wilson L."/>
            <person name="Zhu H."/>
            <person name="Wood D.W."/>
        </authorList>
    </citation>
    <scope>NUCLEOTIDE SEQUENCE [LARGE SCALE GENOMIC DNA]</scope>
    <source>
        <strain>K84 / ATCC BAA-868</strain>
    </source>
</reference>
<accession>B9JHZ9</accession>
<comment type="function">
    <text evidence="1">Involved in the catabolism of homogentisate (2,5-dihydroxyphenylacetate or 2,5-OH-PhAc), a central intermediate in the degradation of phenylalanine and tyrosine. Catalyzes the oxidative ring cleavage of the aromatic ring of homogentisate to yield maleylacetoacetate.</text>
</comment>
<comment type="catalytic activity">
    <reaction evidence="1">
        <text>homogentisate + O2 = 4-maleylacetoacetate + H(+)</text>
        <dbReference type="Rhea" id="RHEA:15449"/>
        <dbReference type="ChEBI" id="CHEBI:15378"/>
        <dbReference type="ChEBI" id="CHEBI:15379"/>
        <dbReference type="ChEBI" id="CHEBI:16169"/>
        <dbReference type="ChEBI" id="CHEBI:17105"/>
        <dbReference type="EC" id="1.13.11.5"/>
    </reaction>
</comment>
<comment type="cofactor">
    <cofactor evidence="1">
        <name>Fe cation</name>
        <dbReference type="ChEBI" id="CHEBI:24875"/>
    </cofactor>
</comment>
<comment type="pathway">
    <text evidence="1">Amino-acid degradation; L-phenylalanine degradation; acetoacetate and fumarate from L-phenylalanine: step 4/6.</text>
</comment>
<comment type="subunit">
    <text evidence="1">Hexamer; dimer of trimers.</text>
</comment>
<comment type="similarity">
    <text evidence="1">Belongs to the homogentisate dioxygenase family.</text>
</comment>
<name>HGD_RHIR8</name>
<protein>
    <recommendedName>
        <fullName evidence="1">Homogentisate 1,2-dioxygenase</fullName>
        <shortName evidence="1">HGDO</shortName>
        <ecNumber evidence="1">1.13.11.5</ecNumber>
    </recommendedName>
    <alternativeName>
        <fullName evidence="1">Homogentisate oxygenase</fullName>
    </alternativeName>
    <alternativeName>
        <fullName evidence="1">Homogentisic acid oxidase</fullName>
    </alternativeName>
    <alternativeName>
        <fullName evidence="1">Homogentisicase</fullName>
    </alternativeName>
</protein>
<keyword id="KW-0223">Dioxygenase</keyword>
<keyword id="KW-0408">Iron</keyword>
<keyword id="KW-0479">Metal-binding</keyword>
<keyword id="KW-0560">Oxidoreductase</keyword>
<keyword id="KW-0585">Phenylalanine catabolism</keyword>
<keyword id="KW-0828">Tyrosine catabolism</keyword>
<evidence type="ECO:0000255" key="1">
    <source>
        <dbReference type="HAMAP-Rule" id="MF_00334"/>
    </source>
</evidence>
<sequence>MDQTMTQASDKEASVADKLQYMPGFGNDFETETLPGALPQGQNSPQKCNYGLYAEQLSGSPFTAPRGTNERSWLYRIRPSVRHTRRFSNASYPHWKSAPCLDDHSLPLGQLRWGPMPVPDEKLSFLDGVRTMTTAGDVLTQTGMAAHVYVFNEDMVDDYAFNADGELLIVPQVGAIRVFTEMGIMDVEPLEIVLIPRGMMFKVLRKGDEKVWRGYICENYGAKFTLPDRGPIGANCLANPRDFKTPVAAYEDKEAPCRVHVKWCGKFYVTEIGHSPLDVVAWHGNYAPFKYDLRTFSPVGAILFDHPDPSIFTVLTAPTESAGTANVDFVIFPPRWLVAEHTFRPPWYHRNIMSEFMGLIHGQYDAKEEGFVPGGISLHNMMLPHGPDASGFEKASNSELKPVKLDHTMAFMFETRYPQQVTKYAAELETLQDNYLECWDGLERRFDGTPGIK</sequence>
<gene>
    <name evidence="1" type="primary">hmgA</name>
    <name type="ordered locus">Arad_8212</name>
</gene>
<feature type="chain" id="PRO_1000190373" description="Homogentisate 1,2-dioxygenase">
    <location>
        <begin position="1"/>
        <end position="453"/>
    </location>
</feature>
<feature type="active site" description="Proton acceptor" evidence="1">
    <location>
        <position position="306"/>
    </location>
</feature>
<feature type="binding site" evidence="1">
    <location>
        <position position="349"/>
    </location>
    <ligand>
        <name>Fe cation</name>
        <dbReference type="ChEBI" id="CHEBI:24875"/>
    </ligand>
</feature>
<feature type="binding site" evidence="1">
    <location>
        <position position="355"/>
    </location>
    <ligand>
        <name>Fe cation</name>
        <dbReference type="ChEBI" id="CHEBI:24875"/>
    </ligand>
</feature>
<feature type="binding site" evidence="1">
    <location>
        <position position="364"/>
    </location>
    <ligand>
        <name>homogentisate</name>
        <dbReference type="ChEBI" id="CHEBI:16169"/>
    </ligand>
</feature>
<feature type="binding site" evidence="1">
    <location>
        <position position="385"/>
    </location>
    <ligand>
        <name>Fe cation</name>
        <dbReference type="ChEBI" id="CHEBI:24875"/>
    </ligand>
</feature>
<feature type="binding site" evidence="1">
    <location>
        <position position="385"/>
    </location>
    <ligand>
        <name>homogentisate</name>
        <dbReference type="ChEBI" id="CHEBI:16169"/>
    </ligand>
</feature>
<dbReference type="EC" id="1.13.11.5" evidence="1"/>
<dbReference type="EMBL" id="CP000629">
    <property type="protein sequence ID" value="ACM29541.1"/>
    <property type="molecule type" value="Genomic_DNA"/>
</dbReference>
<dbReference type="RefSeq" id="WP_012649837.1">
    <property type="nucleotide sequence ID" value="NC_011983.1"/>
</dbReference>
<dbReference type="SMR" id="B9JHZ9"/>
<dbReference type="STRING" id="311403.Arad_8212"/>
<dbReference type="KEGG" id="ara:Arad_8212"/>
<dbReference type="eggNOG" id="COG3508">
    <property type="taxonomic scope" value="Bacteria"/>
</dbReference>
<dbReference type="HOGENOM" id="CLU_027174_0_0_5"/>
<dbReference type="UniPathway" id="UPA00139">
    <property type="reaction ID" value="UER00339"/>
</dbReference>
<dbReference type="Proteomes" id="UP000001600">
    <property type="component" value="Chromosome 2"/>
</dbReference>
<dbReference type="GO" id="GO:0005737">
    <property type="term" value="C:cytoplasm"/>
    <property type="evidence" value="ECO:0007669"/>
    <property type="project" value="TreeGrafter"/>
</dbReference>
<dbReference type="GO" id="GO:0004411">
    <property type="term" value="F:homogentisate 1,2-dioxygenase activity"/>
    <property type="evidence" value="ECO:0007669"/>
    <property type="project" value="UniProtKB-UniRule"/>
</dbReference>
<dbReference type="GO" id="GO:0005506">
    <property type="term" value="F:iron ion binding"/>
    <property type="evidence" value="ECO:0007669"/>
    <property type="project" value="UniProtKB-UniRule"/>
</dbReference>
<dbReference type="GO" id="GO:0006559">
    <property type="term" value="P:L-phenylalanine catabolic process"/>
    <property type="evidence" value="ECO:0007669"/>
    <property type="project" value="UniProtKB-UniRule"/>
</dbReference>
<dbReference type="GO" id="GO:0006572">
    <property type="term" value="P:tyrosine catabolic process"/>
    <property type="evidence" value="ECO:0007669"/>
    <property type="project" value="UniProtKB-UniRule"/>
</dbReference>
<dbReference type="CDD" id="cd07000">
    <property type="entry name" value="cupin_HGO_N"/>
    <property type="match status" value="1"/>
</dbReference>
<dbReference type="FunFam" id="2.60.120.10:FF:000053">
    <property type="entry name" value="Homogentisate 1,2-dioxygenase"/>
    <property type="match status" value="1"/>
</dbReference>
<dbReference type="Gene3D" id="2.60.120.10">
    <property type="entry name" value="Jelly Rolls"/>
    <property type="match status" value="1"/>
</dbReference>
<dbReference type="HAMAP" id="MF_00334">
    <property type="entry name" value="Homogentis_dioxygen"/>
    <property type="match status" value="1"/>
</dbReference>
<dbReference type="InterPro" id="IPR046451">
    <property type="entry name" value="HgmA_C"/>
</dbReference>
<dbReference type="InterPro" id="IPR046452">
    <property type="entry name" value="HgmA_N"/>
</dbReference>
<dbReference type="InterPro" id="IPR005708">
    <property type="entry name" value="Homogentis_dOase"/>
</dbReference>
<dbReference type="InterPro" id="IPR022950">
    <property type="entry name" value="Homogentis_dOase_bac"/>
</dbReference>
<dbReference type="InterPro" id="IPR014710">
    <property type="entry name" value="RmlC-like_jellyroll"/>
</dbReference>
<dbReference type="InterPro" id="IPR011051">
    <property type="entry name" value="RmlC_Cupin_sf"/>
</dbReference>
<dbReference type="NCBIfam" id="TIGR01015">
    <property type="entry name" value="hmgA"/>
    <property type="match status" value="1"/>
</dbReference>
<dbReference type="PANTHER" id="PTHR11056">
    <property type="entry name" value="HOMOGENTISATE 1,2-DIOXYGENASE"/>
    <property type="match status" value="1"/>
</dbReference>
<dbReference type="PANTHER" id="PTHR11056:SF0">
    <property type="entry name" value="HOMOGENTISATE 1,2-DIOXYGENASE"/>
    <property type="match status" value="1"/>
</dbReference>
<dbReference type="Pfam" id="PF04209">
    <property type="entry name" value="HgmA_C"/>
    <property type="match status" value="1"/>
</dbReference>
<dbReference type="Pfam" id="PF20510">
    <property type="entry name" value="HgmA_N"/>
    <property type="match status" value="1"/>
</dbReference>
<dbReference type="SUPFAM" id="SSF51182">
    <property type="entry name" value="RmlC-like cupins"/>
    <property type="match status" value="1"/>
</dbReference>
<proteinExistence type="inferred from homology"/>